<comment type="function">
    <text evidence="1">Protein modifier that is covalently attached to lysine residues of substrate proteins, thereby targeting them for proteasomal degradation. The tagging system is termed pupylation.</text>
</comment>
<comment type="pathway">
    <text evidence="1">Protein degradation; proteasomal Pup-dependent pathway.</text>
</comment>
<comment type="subunit">
    <text evidence="1">Strongly interacts with the proteasome-associated ATPase ARC through a hydrophobic interface; the interacting region of Pup lies in its C-terminal half. There is one Pup binding site per ARC hexamer ring.</text>
</comment>
<comment type="domain">
    <text evidence="1">The N-terminal unstructured half of Pup provides a signal required to initiate unfolding and degradation by the proteasome but is not needed for pupylation, while the C-terminal helical half of Pup interacts with ARC to target proteins to the proteasome.</text>
</comment>
<comment type="PTM">
    <text evidence="1">Is modified by deamidation of its C-terminal glutamine to glutamate by the deamidase Dop, a prerequisite to the subsequent pupylation process.</text>
</comment>
<comment type="similarity">
    <text evidence="1">Belongs to the prokaryotic ubiquitin-like protein family.</text>
</comment>
<accession>C1AQ27</accession>
<feature type="chain" id="PRO_0000390590" description="Prokaryotic ubiquitin-like protein Pup">
    <location>
        <begin position="1"/>
        <end position="64"/>
    </location>
</feature>
<feature type="region of interest" description="Disordered" evidence="2">
    <location>
        <begin position="1"/>
        <end position="37"/>
    </location>
</feature>
<feature type="region of interest" description="ARC ATPase binding" evidence="1">
    <location>
        <begin position="21"/>
        <end position="58"/>
    </location>
</feature>
<feature type="coiled-coil region" evidence="1">
    <location>
        <begin position="23"/>
        <end position="52"/>
    </location>
</feature>
<feature type="modified residue" description="Deamidated glutamine" evidence="1">
    <location>
        <position position="64"/>
    </location>
</feature>
<feature type="cross-link" description="Isoglutamyl lysine isopeptide (Gln-Lys) (interchain with K-? in acceptor proteins)" evidence="1">
    <location>
        <position position="64"/>
    </location>
</feature>
<keyword id="KW-0175">Coiled coil</keyword>
<keyword id="KW-1017">Isopeptide bond</keyword>
<keyword id="KW-0833">Ubl conjugation pathway</keyword>
<name>PUP_MYCBT</name>
<gene>
    <name evidence="1" type="primary">pup</name>
    <name type="ordered locus">JTY_2122</name>
</gene>
<organism>
    <name type="scientific">Mycobacterium bovis (strain BCG / Tokyo 172 / ATCC 35737 / TMC 1019)</name>
    <dbReference type="NCBI Taxonomy" id="561275"/>
    <lineage>
        <taxon>Bacteria</taxon>
        <taxon>Bacillati</taxon>
        <taxon>Actinomycetota</taxon>
        <taxon>Actinomycetes</taxon>
        <taxon>Mycobacteriales</taxon>
        <taxon>Mycobacteriaceae</taxon>
        <taxon>Mycobacterium</taxon>
        <taxon>Mycobacterium tuberculosis complex</taxon>
    </lineage>
</organism>
<protein>
    <recommendedName>
        <fullName evidence="1">Prokaryotic ubiquitin-like protein Pup</fullName>
    </recommendedName>
    <alternativeName>
        <fullName evidence="1">Bacterial ubiquitin-like modifier</fullName>
    </alternativeName>
</protein>
<proteinExistence type="inferred from homology"/>
<dbReference type="EMBL" id="AP010918">
    <property type="protein sequence ID" value="BAH26406.1"/>
    <property type="molecule type" value="Genomic_DNA"/>
</dbReference>
<dbReference type="RefSeq" id="WP_003411026.1">
    <property type="nucleotide sequence ID" value="NZ_CP014566.1"/>
</dbReference>
<dbReference type="SMR" id="C1AQ27"/>
<dbReference type="KEGG" id="mbt:JTY_2122"/>
<dbReference type="HOGENOM" id="CLU_183816_1_0_11"/>
<dbReference type="UniPathway" id="UPA00997"/>
<dbReference type="GO" id="GO:0070628">
    <property type="term" value="F:proteasome binding"/>
    <property type="evidence" value="ECO:0007669"/>
    <property type="project" value="UniProtKB-UniRule"/>
</dbReference>
<dbReference type="GO" id="GO:0031386">
    <property type="term" value="F:protein tag activity"/>
    <property type="evidence" value="ECO:0007669"/>
    <property type="project" value="UniProtKB-UniRule"/>
</dbReference>
<dbReference type="GO" id="GO:0019941">
    <property type="term" value="P:modification-dependent protein catabolic process"/>
    <property type="evidence" value="ECO:0007669"/>
    <property type="project" value="UniProtKB-UniRule"/>
</dbReference>
<dbReference type="GO" id="GO:0010498">
    <property type="term" value="P:proteasomal protein catabolic process"/>
    <property type="evidence" value="ECO:0007669"/>
    <property type="project" value="UniProtKB-UniRule"/>
</dbReference>
<dbReference type="GO" id="GO:0070490">
    <property type="term" value="P:protein pupylation"/>
    <property type="evidence" value="ECO:0007669"/>
    <property type="project" value="UniProtKB-UniRule"/>
</dbReference>
<dbReference type="HAMAP" id="MF_02106">
    <property type="entry name" value="Pup"/>
    <property type="match status" value="1"/>
</dbReference>
<dbReference type="InterPro" id="IPR008515">
    <property type="entry name" value="Ubiquitin-like_Pup"/>
</dbReference>
<dbReference type="NCBIfam" id="TIGR03687">
    <property type="entry name" value="pupylate_cterm"/>
    <property type="match status" value="1"/>
</dbReference>
<dbReference type="Pfam" id="PF05639">
    <property type="entry name" value="Pup"/>
    <property type="match status" value="1"/>
</dbReference>
<sequence>MAQEQTKRGGGGGDDDDIAGSTAAGQERREKLTEETDDLLDEIDDVLEENAEDFVRAYVQKGGQ</sequence>
<reference key="1">
    <citation type="journal article" date="2009" name="Vaccine">
        <title>Whole genome sequence analysis of Mycobacterium bovis bacillus Calmette-Guerin (BCG) Tokyo 172: a comparative study of BCG vaccine substrains.</title>
        <authorList>
            <person name="Seki M."/>
            <person name="Honda I."/>
            <person name="Fujita I."/>
            <person name="Yano I."/>
            <person name="Yamamoto S."/>
            <person name="Koyama A."/>
        </authorList>
    </citation>
    <scope>NUCLEOTIDE SEQUENCE [LARGE SCALE GENOMIC DNA]</scope>
    <source>
        <strain>BCG / Tokyo 172 / ATCC 35737 / TMC 1019</strain>
    </source>
</reference>
<evidence type="ECO:0000255" key="1">
    <source>
        <dbReference type="HAMAP-Rule" id="MF_02106"/>
    </source>
</evidence>
<evidence type="ECO:0000256" key="2">
    <source>
        <dbReference type="SAM" id="MobiDB-lite"/>
    </source>
</evidence>